<sequence>MLYNIPCRIYILSTLSLCISGIVSTATATSSETKISNEETLVVTTNRSASNLWESPATIQVIDQQTLQNSTNASIADNLQDIPGVEITDNSLAGRKQIRIRGWICPYISRHLLSLNPLQARCRRYSRGER</sequence>
<gene>
    <name type="primary">yoeA</name>
    <name type="ordered locus">b4582</name>
    <name type="ordered locus">JW1980</name>
    <name type="ORF">b1995</name>
    <name type="ORF">b1998</name>
</gene>
<accession>P76356</accession>
<accession>P76358</accession>
<accession>P94753</accession>
<feature type="signal peptide" evidence="1">
    <location>
        <begin position="1"/>
        <end position="28"/>
    </location>
</feature>
<feature type="chain" id="PRO_0000271884" description="Protein YoeA">
    <location>
        <begin position="29"/>
        <end position="130"/>
    </location>
</feature>
<feature type="domain" description="TBDR plug" evidence="2">
    <location>
        <begin position="51"/>
        <end position="130"/>
    </location>
</feature>
<dbReference type="EMBL" id="U00096">
    <property type="status" value="NOT_ANNOTATED_CDS"/>
    <property type="molecule type" value="Genomic_DNA"/>
</dbReference>
<dbReference type="EMBL" id="AP009048">
    <property type="protein sequence ID" value="BAA15823.2"/>
    <property type="molecule type" value="Genomic_DNA"/>
</dbReference>
<dbReference type="PIR" id="B64964">
    <property type="entry name" value="B64964"/>
</dbReference>
<dbReference type="PIR" id="E64964">
    <property type="entry name" value="E64964"/>
</dbReference>
<dbReference type="SMR" id="P76356"/>
<dbReference type="BioGRID" id="4262115">
    <property type="interactions" value="24"/>
</dbReference>
<dbReference type="FunCoup" id="P76356">
    <property type="interactions" value="4"/>
</dbReference>
<dbReference type="IntAct" id="P76356">
    <property type="interactions" value="4"/>
</dbReference>
<dbReference type="KEGG" id="ecj:JW1980"/>
<dbReference type="eggNOG" id="COG4771">
    <property type="taxonomic scope" value="Bacteria"/>
</dbReference>
<dbReference type="HOGENOM" id="CLU_2492903_0_0_6"/>
<dbReference type="InParanoid" id="P76356"/>
<dbReference type="Proteomes" id="UP000000625">
    <property type="component" value="Chromosome"/>
</dbReference>
<dbReference type="Gene3D" id="2.170.130.10">
    <property type="entry name" value="TonB-dependent receptor, plug domain"/>
    <property type="match status" value="1"/>
</dbReference>
<dbReference type="InterPro" id="IPR012910">
    <property type="entry name" value="Plug_dom"/>
</dbReference>
<dbReference type="InterPro" id="IPR037066">
    <property type="entry name" value="Plug_dom_sf"/>
</dbReference>
<dbReference type="InterPro" id="IPR039426">
    <property type="entry name" value="TonB-dep_rcpt-like"/>
</dbReference>
<dbReference type="Pfam" id="PF07715">
    <property type="entry name" value="Plug"/>
    <property type="match status" value="1"/>
</dbReference>
<dbReference type="SUPFAM" id="SSF56935">
    <property type="entry name" value="Porins"/>
    <property type="match status" value="1"/>
</dbReference>
<dbReference type="PROSITE" id="PS52016">
    <property type="entry name" value="TONB_DEPENDENT_REC_3"/>
    <property type="match status" value="1"/>
</dbReference>
<name>YOEA_ECOLI</name>
<organism>
    <name type="scientific">Escherichia coli (strain K12)</name>
    <dbReference type="NCBI Taxonomy" id="83333"/>
    <lineage>
        <taxon>Bacteria</taxon>
        <taxon>Pseudomonadati</taxon>
        <taxon>Pseudomonadota</taxon>
        <taxon>Gammaproteobacteria</taxon>
        <taxon>Enterobacterales</taxon>
        <taxon>Enterobacteriaceae</taxon>
        <taxon>Escherichia</taxon>
    </lineage>
</organism>
<reference key="1">
    <citation type="journal article" date="1997" name="Science">
        <title>The complete genome sequence of Escherichia coli K-12.</title>
        <authorList>
            <person name="Blattner F.R."/>
            <person name="Plunkett G. III"/>
            <person name="Bloch C.A."/>
            <person name="Perna N.T."/>
            <person name="Burland V."/>
            <person name="Riley M."/>
            <person name="Collado-Vides J."/>
            <person name="Glasner J.D."/>
            <person name="Rode C.K."/>
            <person name="Mayhew G.F."/>
            <person name="Gregor J."/>
            <person name="Davis N.W."/>
            <person name="Kirkpatrick H.A."/>
            <person name="Goeden M.A."/>
            <person name="Rose D.J."/>
            <person name="Mau B."/>
            <person name="Shao Y."/>
        </authorList>
    </citation>
    <scope>NUCLEOTIDE SEQUENCE [LARGE SCALE GENOMIC DNA]</scope>
    <source>
        <strain>K12 / MG1655 / ATCC 47076</strain>
    </source>
</reference>
<reference key="2">
    <citation type="journal article" date="2006" name="Mol. Syst. Biol.">
        <title>Highly accurate genome sequences of Escherichia coli K-12 strains MG1655 and W3110.</title>
        <authorList>
            <person name="Hayashi K."/>
            <person name="Morooka N."/>
            <person name="Yamamoto Y."/>
            <person name="Fujita K."/>
            <person name="Isono K."/>
            <person name="Choi S."/>
            <person name="Ohtsubo E."/>
            <person name="Baba T."/>
            <person name="Wanner B.L."/>
            <person name="Mori H."/>
            <person name="Horiuchi T."/>
        </authorList>
    </citation>
    <scope>NUCLEOTIDE SEQUENCE [LARGE SCALE GENOMIC DNA]</scope>
    <source>
        <strain>K12 / W3110 / ATCC 27325 / DSM 5911</strain>
    </source>
</reference>
<keyword id="KW-1185">Reference proteome</keyword>
<keyword id="KW-0732">Signal</keyword>
<comment type="miscellaneous">
    <text evidence="3">Encoded by the CP4-44 prophage.</text>
</comment>
<comment type="miscellaneous">
    <text evidence="3">Maybe missing up to 600 C-terminal residues compared to orthologs. The original sequence is interrupted after position 81 and the original C-terminal 552 amino acids are deleted.</text>
</comment>
<comment type="similarity">
    <text evidence="2">Belongs to the TonB-dependent receptor family.</text>
</comment>
<proteinExistence type="inferred from homology"/>
<protein>
    <recommendedName>
        <fullName>Protein YoeA</fullName>
    </recommendedName>
</protein>
<evidence type="ECO:0000255" key="1"/>
<evidence type="ECO:0000255" key="2">
    <source>
        <dbReference type="PROSITE-ProRule" id="PRU01360"/>
    </source>
</evidence>
<evidence type="ECO:0000305" key="3"/>